<evidence type="ECO:0000255" key="1">
    <source>
        <dbReference type="HAMAP-Rule" id="MF_00248"/>
    </source>
</evidence>
<reference key="1">
    <citation type="submission" date="2007-07" db="EMBL/GenBank/DDBJ databases">
        <title>Genome sequence of Campylobacter curvus 525.92 isolated from human feces.</title>
        <authorList>
            <person name="Fouts D.E."/>
            <person name="Mongodin E.F."/>
            <person name="Puiu D."/>
            <person name="Sebastian Y."/>
            <person name="Miller W.G."/>
            <person name="Mandrell R.E."/>
            <person name="Lastovica A.J."/>
            <person name="Nelson K.E."/>
        </authorList>
    </citation>
    <scope>NUCLEOTIDE SEQUENCE [LARGE SCALE GENOMIC DNA]</scope>
    <source>
        <strain>525.92</strain>
    </source>
</reference>
<gene>
    <name evidence="1" type="primary">hslV</name>
    <name type="ordered locus">Ccur92_10240</name>
    <name type="ORF">CCV52592_1974</name>
</gene>
<keyword id="KW-0021">Allosteric enzyme</keyword>
<keyword id="KW-0963">Cytoplasm</keyword>
<keyword id="KW-0378">Hydrolase</keyword>
<keyword id="KW-0479">Metal-binding</keyword>
<keyword id="KW-0645">Protease</keyword>
<keyword id="KW-1185">Reference proteome</keyword>
<keyword id="KW-0915">Sodium</keyword>
<keyword id="KW-0888">Threonine protease</keyword>
<proteinExistence type="inferred from homology"/>
<feature type="chain" id="PRO_1000012596" description="ATP-dependent protease subunit HslV">
    <location>
        <begin position="1"/>
        <end position="180"/>
    </location>
</feature>
<feature type="active site" evidence="1">
    <location>
        <position position="5"/>
    </location>
</feature>
<feature type="binding site" evidence="1">
    <location>
        <position position="161"/>
    </location>
    <ligand>
        <name>Na(+)</name>
        <dbReference type="ChEBI" id="CHEBI:29101"/>
    </ligand>
</feature>
<feature type="binding site" evidence="1">
    <location>
        <position position="164"/>
    </location>
    <ligand>
        <name>Na(+)</name>
        <dbReference type="ChEBI" id="CHEBI:29101"/>
    </ligand>
</feature>
<feature type="binding site" evidence="1">
    <location>
        <position position="167"/>
    </location>
    <ligand>
        <name>Na(+)</name>
        <dbReference type="ChEBI" id="CHEBI:29101"/>
    </ligand>
</feature>
<protein>
    <recommendedName>
        <fullName evidence="1">ATP-dependent protease subunit HslV</fullName>
        <ecNumber evidence="1">3.4.25.2</ecNumber>
    </recommendedName>
</protein>
<sequence length="180" mass="19670">MFHATTILAYKGKNKSVIGGDGQVSFGNTVLKGNAVKIRKIKDGKVLAGFAGSTADAFNLFDMFEENLEHAKGDLLKAVIEFSKAWRKDKYLRKLEAMMLVLNREKIFLLSGTGDVVEPEDGKIAAIGSGGNFALSAARALDKFADIDEEKLVKESLTIAGEICIYTNTNIKTYVIEDEK</sequence>
<comment type="function">
    <text evidence="1">Protease subunit of a proteasome-like degradation complex believed to be a general protein degrading machinery.</text>
</comment>
<comment type="catalytic activity">
    <reaction evidence="1">
        <text>ATP-dependent cleavage of peptide bonds with broad specificity.</text>
        <dbReference type="EC" id="3.4.25.2"/>
    </reaction>
</comment>
<comment type="activity regulation">
    <text evidence="1">Allosterically activated by HslU binding.</text>
</comment>
<comment type="subunit">
    <text evidence="1">A double ring-shaped homohexamer of HslV is capped on each side by a ring-shaped HslU homohexamer. The assembly of the HslU/HslV complex is dependent on binding of ATP.</text>
</comment>
<comment type="subcellular location">
    <subcellularLocation>
        <location evidence="1">Cytoplasm</location>
    </subcellularLocation>
</comment>
<comment type="similarity">
    <text evidence="1">Belongs to the peptidase T1B family. HslV subfamily.</text>
</comment>
<organism>
    <name type="scientific">Campylobacter curvus (strain 525.92)</name>
    <dbReference type="NCBI Taxonomy" id="360105"/>
    <lineage>
        <taxon>Bacteria</taxon>
        <taxon>Pseudomonadati</taxon>
        <taxon>Campylobacterota</taxon>
        <taxon>Epsilonproteobacteria</taxon>
        <taxon>Campylobacterales</taxon>
        <taxon>Campylobacteraceae</taxon>
        <taxon>Campylobacter</taxon>
    </lineage>
</organism>
<dbReference type="EC" id="3.4.25.2" evidence="1"/>
<dbReference type="EMBL" id="CP000767">
    <property type="protein sequence ID" value="EAU00534.1"/>
    <property type="molecule type" value="Genomic_DNA"/>
</dbReference>
<dbReference type="RefSeq" id="WP_009651446.1">
    <property type="nucleotide sequence ID" value="NC_009715.2"/>
</dbReference>
<dbReference type="SMR" id="A7GYN6"/>
<dbReference type="STRING" id="360105.CCV52592_1974"/>
<dbReference type="GeneID" id="61002327"/>
<dbReference type="KEGG" id="ccv:CCV52592_1974"/>
<dbReference type="HOGENOM" id="CLU_093872_1_1_7"/>
<dbReference type="OrthoDB" id="9804884at2"/>
<dbReference type="Proteomes" id="UP000006380">
    <property type="component" value="Chromosome"/>
</dbReference>
<dbReference type="GO" id="GO:0009376">
    <property type="term" value="C:HslUV protease complex"/>
    <property type="evidence" value="ECO:0007669"/>
    <property type="project" value="UniProtKB-UniRule"/>
</dbReference>
<dbReference type="GO" id="GO:0005839">
    <property type="term" value="C:proteasome core complex"/>
    <property type="evidence" value="ECO:0007669"/>
    <property type="project" value="InterPro"/>
</dbReference>
<dbReference type="GO" id="GO:0046872">
    <property type="term" value="F:metal ion binding"/>
    <property type="evidence" value="ECO:0007669"/>
    <property type="project" value="UniProtKB-KW"/>
</dbReference>
<dbReference type="GO" id="GO:0004298">
    <property type="term" value="F:threonine-type endopeptidase activity"/>
    <property type="evidence" value="ECO:0007669"/>
    <property type="project" value="UniProtKB-KW"/>
</dbReference>
<dbReference type="GO" id="GO:0051603">
    <property type="term" value="P:proteolysis involved in protein catabolic process"/>
    <property type="evidence" value="ECO:0007669"/>
    <property type="project" value="InterPro"/>
</dbReference>
<dbReference type="Gene3D" id="3.60.20.10">
    <property type="entry name" value="Glutamine Phosphoribosylpyrophosphate, subunit 1, domain 1"/>
    <property type="match status" value="1"/>
</dbReference>
<dbReference type="HAMAP" id="MF_00248">
    <property type="entry name" value="HslV"/>
    <property type="match status" value="1"/>
</dbReference>
<dbReference type="InterPro" id="IPR022281">
    <property type="entry name" value="ATP-dep_Prtase_HsIV_su"/>
</dbReference>
<dbReference type="InterPro" id="IPR029055">
    <property type="entry name" value="Ntn_hydrolases_N"/>
</dbReference>
<dbReference type="InterPro" id="IPR001353">
    <property type="entry name" value="Proteasome_sua/b"/>
</dbReference>
<dbReference type="InterPro" id="IPR023333">
    <property type="entry name" value="Proteasome_suB-type"/>
</dbReference>
<dbReference type="NCBIfam" id="TIGR03692">
    <property type="entry name" value="ATP_dep_HslV"/>
    <property type="match status" value="1"/>
</dbReference>
<dbReference type="NCBIfam" id="NF003964">
    <property type="entry name" value="PRK05456.1"/>
    <property type="match status" value="1"/>
</dbReference>
<dbReference type="PANTHER" id="PTHR32194:SF0">
    <property type="entry name" value="ATP-DEPENDENT PROTEASE SUBUNIT HSLV"/>
    <property type="match status" value="1"/>
</dbReference>
<dbReference type="PANTHER" id="PTHR32194">
    <property type="entry name" value="METALLOPROTEASE TLDD"/>
    <property type="match status" value="1"/>
</dbReference>
<dbReference type="Pfam" id="PF00227">
    <property type="entry name" value="Proteasome"/>
    <property type="match status" value="1"/>
</dbReference>
<dbReference type="PIRSF" id="PIRSF039093">
    <property type="entry name" value="HslV"/>
    <property type="match status" value="1"/>
</dbReference>
<dbReference type="SUPFAM" id="SSF56235">
    <property type="entry name" value="N-terminal nucleophile aminohydrolases (Ntn hydrolases)"/>
    <property type="match status" value="1"/>
</dbReference>
<dbReference type="PROSITE" id="PS51476">
    <property type="entry name" value="PROTEASOME_BETA_2"/>
    <property type="match status" value="1"/>
</dbReference>
<accession>A7GYN6</accession>
<name>HSLV_CAMC5</name>